<organism>
    <name type="scientific">Arabidopsis thaliana</name>
    <name type="common">Mouse-ear cress</name>
    <dbReference type="NCBI Taxonomy" id="3702"/>
    <lineage>
        <taxon>Eukaryota</taxon>
        <taxon>Viridiplantae</taxon>
        <taxon>Streptophyta</taxon>
        <taxon>Embryophyta</taxon>
        <taxon>Tracheophyta</taxon>
        <taxon>Spermatophyta</taxon>
        <taxon>Magnoliopsida</taxon>
        <taxon>eudicotyledons</taxon>
        <taxon>Gunneridae</taxon>
        <taxon>Pentapetalae</taxon>
        <taxon>rosids</taxon>
        <taxon>malvids</taxon>
        <taxon>Brassicales</taxon>
        <taxon>Brassicaceae</taxon>
        <taxon>Camelineae</taxon>
        <taxon>Arabidopsis</taxon>
    </lineage>
</organism>
<protein>
    <recommendedName>
        <fullName evidence="4">PHD finger-containing protein 5</fullName>
    </recommendedName>
</protein>
<evidence type="ECO:0000255" key="1">
    <source>
        <dbReference type="PROSITE-ProRule" id="PRU00146"/>
    </source>
</evidence>
<evidence type="ECO:0000256" key="2">
    <source>
        <dbReference type="SAM" id="MobiDB-lite"/>
    </source>
</evidence>
<evidence type="ECO:0000269" key="3">
    <source>
    </source>
</evidence>
<evidence type="ECO:0000303" key="4">
    <source>
    </source>
</evidence>
<evidence type="ECO:0000312" key="5">
    <source>
        <dbReference type="Araport" id="AT5G61100"/>
    </source>
</evidence>
<evidence type="ECO:0000312" key="6">
    <source>
        <dbReference type="EMBL" id="ANM68177.1"/>
    </source>
</evidence>
<feature type="chain" id="PRO_0000458549" description="PHD finger-containing protein 5">
    <location>
        <begin position="1"/>
        <end position="224"/>
    </location>
</feature>
<feature type="zinc finger region" description="PHD-type" evidence="1">
    <location>
        <begin position="31"/>
        <end position="81"/>
    </location>
</feature>
<feature type="region of interest" description="Disordered" evidence="2">
    <location>
        <begin position="116"/>
        <end position="137"/>
    </location>
</feature>
<feature type="binding site" evidence="1">
    <location>
        <position position="34"/>
    </location>
    <ligand>
        <name>Zn(2+)</name>
        <dbReference type="ChEBI" id="CHEBI:29105"/>
        <label>1</label>
    </ligand>
</feature>
<feature type="binding site" evidence="1">
    <location>
        <position position="37"/>
    </location>
    <ligand>
        <name>Zn(2+)</name>
        <dbReference type="ChEBI" id="CHEBI:29105"/>
        <label>1</label>
    </ligand>
</feature>
<feature type="binding site" evidence="1">
    <location>
        <position position="49"/>
    </location>
    <ligand>
        <name>Zn(2+)</name>
        <dbReference type="ChEBI" id="CHEBI:29105"/>
        <label>2</label>
    </ligand>
</feature>
<feature type="binding site" evidence="1">
    <location>
        <position position="52"/>
    </location>
    <ligand>
        <name>Zn(2+)</name>
        <dbReference type="ChEBI" id="CHEBI:29105"/>
        <label>2</label>
    </ligand>
</feature>
<feature type="binding site" evidence="1">
    <location>
        <position position="58"/>
    </location>
    <ligand>
        <name>Zn(2+)</name>
        <dbReference type="ChEBI" id="CHEBI:29105"/>
        <label>1</label>
    </ligand>
</feature>
<feature type="binding site" evidence="1">
    <location>
        <position position="61"/>
    </location>
    <ligand>
        <name>Zn(2+)</name>
        <dbReference type="ChEBI" id="CHEBI:29105"/>
        <label>1</label>
    </ligand>
</feature>
<feature type="binding site" evidence="1">
    <location>
        <position position="75"/>
    </location>
    <ligand>
        <name>Zn(2+)</name>
        <dbReference type="ChEBI" id="CHEBI:29105"/>
        <label>2</label>
    </ligand>
</feature>
<feature type="binding site" evidence="1">
    <location>
        <position position="78"/>
    </location>
    <ligand>
        <name>Zn(2+)</name>
        <dbReference type="ChEBI" id="CHEBI:29105"/>
        <label>2</label>
    </ligand>
</feature>
<accession>Q9FNQ5</accession>
<accession>A0A178UHK3</accession>
<accession>Q67Z08</accession>
<gene>
    <name evidence="4" type="primary">PHD5</name>
    <name evidence="5" type="ordered locus">At5g61100</name>
    <name evidence="6" type="ORF">MAF19.10</name>
</gene>
<dbReference type="EMBL" id="CP002688">
    <property type="protein sequence ID" value="ANM68177.1"/>
    <property type="molecule type" value="Genomic_DNA"/>
</dbReference>
<dbReference type="EMBL" id="AB006696">
    <property type="protein sequence ID" value="BAB10372.1"/>
    <property type="molecule type" value="Genomic_DNA"/>
</dbReference>
<dbReference type="EMBL" id="AK176310">
    <property type="protein sequence ID" value="BAD44073.1"/>
    <property type="molecule type" value="mRNA"/>
</dbReference>
<dbReference type="RefSeq" id="NP_001329950.1">
    <property type="nucleotide sequence ID" value="NM_001345442.1"/>
</dbReference>
<dbReference type="iPTMnet" id="Q9FNQ5"/>
<dbReference type="EnsemblPlants" id="AT5G61100.2">
    <property type="protein sequence ID" value="AT5G61100.2"/>
    <property type="gene ID" value="AT5G61100"/>
</dbReference>
<dbReference type="GeneID" id="836231"/>
<dbReference type="Gramene" id="AT5G61100.2">
    <property type="protein sequence ID" value="AT5G61100.2"/>
    <property type="gene ID" value="AT5G61100"/>
</dbReference>
<dbReference type="KEGG" id="ath:AT5G61100"/>
<dbReference type="Araport" id="AT5G61100"/>
<dbReference type="TAIR" id="AT5G61100"/>
<dbReference type="OMA" id="CARVMLQ"/>
<dbReference type="OrthoDB" id="651601at2759"/>
<dbReference type="PRO" id="PR:Q9FNQ5"/>
<dbReference type="Proteomes" id="UP000006548">
    <property type="component" value="Chromosome 5"/>
</dbReference>
<dbReference type="ExpressionAtlas" id="Q9FNQ5">
    <property type="expression patterns" value="baseline and differential"/>
</dbReference>
<dbReference type="GO" id="GO:0140566">
    <property type="term" value="F:histone reader activity"/>
    <property type="evidence" value="ECO:0007669"/>
    <property type="project" value="InterPro"/>
</dbReference>
<dbReference type="GO" id="GO:0008270">
    <property type="term" value="F:zinc ion binding"/>
    <property type="evidence" value="ECO:0007669"/>
    <property type="project" value="UniProtKB-KW"/>
</dbReference>
<dbReference type="GO" id="GO:0034244">
    <property type="term" value="P:negative regulation of transcription elongation by RNA polymerase II"/>
    <property type="evidence" value="ECO:0007669"/>
    <property type="project" value="InterPro"/>
</dbReference>
<dbReference type="Gene3D" id="3.30.40.10">
    <property type="entry name" value="Zinc/RING finger domain, C3HC4 (zinc finger)"/>
    <property type="match status" value="1"/>
</dbReference>
<dbReference type="InterPro" id="IPR049914">
    <property type="entry name" value="PHD1-3/5-6"/>
</dbReference>
<dbReference type="InterPro" id="IPR011011">
    <property type="entry name" value="Znf_FYVE_PHD"/>
</dbReference>
<dbReference type="InterPro" id="IPR013083">
    <property type="entry name" value="Znf_RING/FYVE/PHD"/>
</dbReference>
<dbReference type="PANTHER" id="PTHR33304">
    <property type="match status" value="1"/>
</dbReference>
<dbReference type="PANTHER" id="PTHR33304:SF36">
    <property type="entry name" value="GB|AAF26970.1-RELATED"/>
    <property type="match status" value="1"/>
</dbReference>
<dbReference type="SUPFAM" id="SSF57903">
    <property type="entry name" value="FYVE/PHD zinc finger"/>
    <property type="match status" value="1"/>
</dbReference>
<name>PHD5_ARATH</name>
<comment type="function">
    <text evidence="3">Together with AIPP3/BDT1, cooperates to form a BAH-PHD bivalent histone reader complex able to read histone H3 lysine 27 trimethylation (H3K27me3) histone marks in order to regulate transcription, especially to prevent early flowering; promotes AIPP3/BDT1 binding to H3K27me3.</text>
</comment>
<comment type="subunit">
    <text evidence="3">Interacts directly with AIPP3/BDT1.</text>
</comment>
<comment type="disruption phenotype">
    <text evidence="3">No obvious developmental defects (PubMed:33433058). Plants missing all PHD finger-containing proteins (e.g. PHD1, PAIPP2/PHD2, AIPP2/PHD3, PHD4, PHD5 and PHD6) exhibit an increased expression of flowering genes leading to an early flowering phenotype under long-day conditions as well as growth retardation (PubMed:33433058).</text>
</comment>
<sequence length="224" mass="25088">MVYESGNKPGPENPTFSSDLSLSDSLVKLKKKPCEVCGSDANELLMMTCFMCRDTREHTYCARVMFQRVPRLWICEECRDFSSVANKTANAQSSRTIQVEQVVVKQVRIDQTVPSPRTNQVVDNHQDPPIDQTDPSSTTIQVVDNENLIEAAPSSRSNQVVDNKDWIEAAPSLRSNQVVPVAPRIHEFTTDESSSPVSPCSLDDETNLFHFKYPSLSLPPLMKN</sequence>
<reference key="1">
    <citation type="journal article" date="1997" name="DNA Res.">
        <title>Structural analysis of Arabidopsis thaliana chromosome 5. II. Sequence features of the regions of 1,044,062 bp covered by thirteen physically assigned P1 clones.</title>
        <authorList>
            <person name="Kotani H."/>
            <person name="Nakamura Y."/>
            <person name="Sato S."/>
            <person name="Kaneko T."/>
            <person name="Asamizu E."/>
            <person name="Miyajima N."/>
            <person name="Tabata S."/>
        </authorList>
    </citation>
    <scope>NUCLEOTIDE SEQUENCE [LARGE SCALE GENOMIC DNA]</scope>
    <source>
        <strain>cv. Columbia</strain>
    </source>
</reference>
<reference key="2">
    <citation type="journal article" date="2017" name="Plant J.">
        <title>Araport11: a complete reannotation of the Arabidopsis thaliana reference genome.</title>
        <authorList>
            <person name="Cheng C.Y."/>
            <person name="Krishnakumar V."/>
            <person name="Chan A.P."/>
            <person name="Thibaud-Nissen F."/>
            <person name="Schobel S."/>
            <person name="Town C.D."/>
        </authorList>
    </citation>
    <scope>GENOME REANNOTATION</scope>
    <source>
        <strain>cv. Columbia</strain>
    </source>
</reference>
<reference key="3">
    <citation type="submission" date="2004-09" db="EMBL/GenBank/DDBJ databases">
        <title>Large-scale analysis of RIKEN Arabidopsis full-length (RAFL) cDNAs.</title>
        <authorList>
            <person name="Totoki Y."/>
            <person name="Seki M."/>
            <person name="Ishida J."/>
            <person name="Nakajima M."/>
            <person name="Enju A."/>
            <person name="Kamiya A."/>
            <person name="Narusaka M."/>
            <person name="Shin-i T."/>
            <person name="Nakagawa M."/>
            <person name="Sakamoto N."/>
            <person name="Oishi K."/>
            <person name="Kohara Y."/>
            <person name="Kobayashi M."/>
            <person name="Toyoda A."/>
            <person name="Sakaki Y."/>
            <person name="Sakurai T."/>
            <person name="Iida K."/>
            <person name="Akiyama K."/>
            <person name="Satou M."/>
            <person name="Toyoda T."/>
            <person name="Konagaya A."/>
            <person name="Carninci P."/>
            <person name="Kawai J."/>
            <person name="Hayashizaki Y."/>
            <person name="Shinozaki K."/>
        </authorList>
    </citation>
    <scope>NUCLEOTIDE SEQUENCE [LARGE SCALE MRNA] OF 184-224</scope>
    <source>
        <strain>cv. Columbia</strain>
    </source>
</reference>
<reference key="4">
    <citation type="journal article" date="2021" name="J. Integr. Plant Biol.">
        <title>A histone H3K27me3 reader cooperates with a family of PHD finger-containing proteins to regulate flowering time in Arabidopsis.</title>
        <authorList>
            <person name="Qian F."/>
            <person name="Zhao Q.-Y."/>
            <person name="Zhang T.-N."/>
            <person name="Li Y.-L."/>
            <person name="Su Y.-N."/>
            <person name="Li L."/>
            <person name="Sui J.-H."/>
            <person name="Chen S."/>
            <person name="He X.-J."/>
        </authorList>
    </citation>
    <scope>FUNCTION</scope>
    <scope>DISRUPTION PHENOTYPE</scope>
    <scope>INTERACTION WITH AIPP3/BDT1</scope>
    <source>
        <strain>cv. Columbia</strain>
    </source>
</reference>
<keyword id="KW-0479">Metal-binding</keyword>
<keyword id="KW-1185">Reference proteome</keyword>
<keyword id="KW-0804">Transcription</keyword>
<keyword id="KW-0805">Transcription regulation</keyword>
<keyword id="KW-0862">Zinc</keyword>
<keyword id="KW-0863">Zinc-finger</keyword>
<proteinExistence type="evidence at protein level"/>